<reference key="1">
    <citation type="journal article" date="2000" name="DNA Res.">
        <title>Complete genome structure of the nitrogen-fixing symbiotic bacterium Mesorhizobium loti.</title>
        <authorList>
            <person name="Kaneko T."/>
            <person name="Nakamura Y."/>
            <person name="Sato S."/>
            <person name="Asamizu E."/>
            <person name="Kato T."/>
            <person name="Sasamoto S."/>
            <person name="Watanabe A."/>
            <person name="Idesawa K."/>
            <person name="Ishikawa A."/>
            <person name="Kawashima K."/>
            <person name="Kimura T."/>
            <person name="Kishida Y."/>
            <person name="Kiyokawa C."/>
            <person name="Kohara M."/>
            <person name="Matsumoto M."/>
            <person name="Matsuno A."/>
            <person name="Mochizuki Y."/>
            <person name="Nakayama S."/>
            <person name="Nakazaki N."/>
            <person name="Shimpo S."/>
            <person name="Sugimoto M."/>
            <person name="Takeuchi C."/>
            <person name="Yamada M."/>
            <person name="Tabata S."/>
        </authorList>
    </citation>
    <scope>NUCLEOTIDE SEQUENCE [LARGE SCALE GENOMIC DNA]</scope>
    <source>
        <strain>LMG 29417 / CECT 9101 / MAFF 303099</strain>
    </source>
</reference>
<keyword id="KW-0067">ATP-binding</keyword>
<keyword id="KW-0436">Ligase</keyword>
<keyword id="KW-0547">Nucleotide-binding</keyword>
<keyword id="KW-0658">Purine biosynthesis</keyword>
<name>PUR72_RHILO</name>
<sequence length="313" mass="35091">MRTLSDAFIPELPGYYKGKVRENYDLADGRRIIIATDRLSAFDIILTSIPFKGEILTQTARYWFEETADICPNHVLEYPDPNVVVGTRLDILPVEIVVRGYLAGTTSTSILTRYRRGEREMYGMRLPDGLRDNEKLAAPVITPTSKAADGGHDEPLSRAEILAQGLLTQAQWDTVSDYALKLFARGQARAAERGLILADTKYEFGTDKNGTIILADEIHTPDSSRYWIAASYEQALASGTRPDSFDKDFIRSWVAARCDPYKDPIPRIPDEIVEQASRIYAQAYEAITGKAFVPDLSGDTVLDRIRSNLVRFF</sequence>
<organism>
    <name type="scientific">Mesorhizobium japonicum (strain LMG 29417 / CECT 9101 / MAFF 303099)</name>
    <name type="common">Mesorhizobium loti (strain MAFF 303099)</name>
    <dbReference type="NCBI Taxonomy" id="266835"/>
    <lineage>
        <taxon>Bacteria</taxon>
        <taxon>Pseudomonadati</taxon>
        <taxon>Pseudomonadota</taxon>
        <taxon>Alphaproteobacteria</taxon>
        <taxon>Hyphomicrobiales</taxon>
        <taxon>Phyllobacteriaceae</taxon>
        <taxon>Mesorhizobium</taxon>
    </lineage>
</organism>
<protein>
    <recommendedName>
        <fullName>Putative phosphoribosylaminoimidazole-succinocarboxamide synthase 2</fullName>
        <ecNumber>6.3.2.6</ecNumber>
    </recommendedName>
    <alternativeName>
        <fullName>SAICAR synthetase 2</fullName>
    </alternativeName>
</protein>
<proteinExistence type="inferred from homology"/>
<gene>
    <name type="primary">purC2</name>
    <name type="ordered locus">mll2603</name>
</gene>
<evidence type="ECO:0000305" key="1"/>
<dbReference type="EC" id="6.3.2.6"/>
<dbReference type="EMBL" id="BA000012">
    <property type="protein sequence ID" value="BAB49693.1"/>
    <property type="status" value="ALT_INIT"/>
    <property type="molecule type" value="Genomic_DNA"/>
</dbReference>
<dbReference type="RefSeq" id="WP_044548260.1">
    <property type="nucleotide sequence ID" value="NC_002678.2"/>
</dbReference>
<dbReference type="SMR" id="Q98I23"/>
<dbReference type="KEGG" id="mlo:mll2603"/>
<dbReference type="PATRIC" id="fig|266835.9.peg.2089"/>
<dbReference type="eggNOG" id="COG0152">
    <property type="taxonomic scope" value="Bacteria"/>
</dbReference>
<dbReference type="HOGENOM" id="CLU_045637_0_1_5"/>
<dbReference type="UniPathway" id="UPA00074">
    <property type="reaction ID" value="UER00131"/>
</dbReference>
<dbReference type="Proteomes" id="UP000000552">
    <property type="component" value="Chromosome"/>
</dbReference>
<dbReference type="GO" id="GO:0005737">
    <property type="term" value="C:cytoplasm"/>
    <property type="evidence" value="ECO:0007669"/>
    <property type="project" value="TreeGrafter"/>
</dbReference>
<dbReference type="GO" id="GO:0005524">
    <property type="term" value="F:ATP binding"/>
    <property type="evidence" value="ECO:0007669"/>
    <property type="project" value="UniProtKB-KW"/>
</dbReference>
<dbReference type="GO" id="GO:0004639">
    <property type="term" value="F:phosphoribosylaminoimidazolesuccinocarboxamide synthase activity"/>
    <property type="evidence" value="ECO:0007669"/>
    <property type="project" value="UniProtKB-UniRule"/>
</dbReference>
<dbReference type="GO" id="GO:0006189">
    <property type="term" value="P:'de novo' IMP biosynthetic process"/>
    <property type="evidence" value="ECO:0007669"/>
    <property type="project" value="UniProtKB-UniRule"/>
</dbReference>
<dbReference type="CDD" id="cd01414">
    <property type="entry name" value="SAICAR_synt_Sc"/>
    <property type="match status" value="1"/>
</dbReference>
<dbReference type="Gene3D" id="3.30.470.20">
    <property type="entry name" value="ATP-grasp fold, B domain"/>
    <property type="match status" value="1"/>
</dbReference>
<dbReference type="Gene3D" id="3.30.200.20">
    <property type="entry name" value="Phosphorylase Kinase, domain 1"/>
    <property type="match status" value="1"/>
</dbReference>
<dbReference type="HAMAP" id="MF_00137">
    <property type="entry name" value="SAICAR_synth"/>
    <property type="match status" value="1"/>
</dbReference>
<dbReference type="InterPro" id="IPR028923">
    <property type="entry name" value="SAICAR_synt/ADE2_N"/>
</dbReference>
<dbReference type="InterPro" id="IPR018236">
    <property type="entry name" value="SAICAR_synthetase_CS"/>
</dbReference>
<dbReference type="NCBIfam" id="NF009251">
    <property type="entry name" value="PRK12607.1"/>
    <property type="match status" value="1"/>
</dbReference>
<dbReference type="NCBIfam" id="NF010568">
    <property type="entry name" value="PRK13961.1"/>
    <property type="match status" value="1"/>
</dbReference>
<dbReference type="PANTHER" id="PTHR43700">
    <property type="entry name" value="PHOSPHORIBOSYLAMINOIMIDAZOLE-SUCCINOCARBOXAMIDE SYNTHASE"/>
    <property type="match status" value="1"/>
</dbReference>
<dbReference type="PANTHER" id="PTHR43700:SF1">
    <property type="entry name" value="PHOSPHORIBOSYLAMINOIMIDAZOLE-SUCCINOCARBOXAMIDE SYNTHASE"/>
    <property type="match status" value="1"/>
</dbReference>
<dbReference type="Pfam" id="PF01259">
    <property type="entry name" value="SAICAR_synt"/>
    <property type="match status" value="1"/>
</dbReference>
<dbReference type="SUPFAM" id="SSF56104">
    <property type="entry name" value="SAICAR synthase-like"/>
    <property type="match status" value="1"/>
</dbReference>
<dbReference type="PROSITE" id="PS01057">
    <property type="entry name" value="SAICAR_SYNTHETASE_1"/>
    <property type="match status" value="1"/>
</dbReference>
<dbReference type="PROSITE" id="PS01058">
    <property type="entry name" value="SAICAR_SYNTHETASE_2"/>
    <property type="match status" value="1"/>
</dbReference>
<comment type="catalytic activity">
    <reaction>
        <text>5-amino-1-(5-phospho-D-ribosyl)imidazole-4-carboxylate + L-aspartate + ATP = (2S)-2-[5-amino-1-(5-phospho-beta-D-ribosyl)imidazole-4-carboxamido]succinate + ADP + phosphate + 2 H(+)</text>
        <dbReference type="Rhea" id="RHEA:22628"/>
        <dbReference type="ChEBI" id="CHEBI:15378"/>
        <dbReference type="ChEBI" id="CHEBI:29991"/>
        <dbReference type="ChEBI" id="CHEBI:30616"/>
        <dbReference type="ChEBI" id="CHEBI:43474"/>
        <dbReference type="ChEBI" id="CHEBI:58443"/>
        <dbReference type="ChEBI" id="CHEBI:77657"/>
        <dbReference type="ChEBI" id="CHEBI:456216"/>
        <dbReference type="EC" id="6.3.2.6"/>
    </reaction>
</comment>
<comment type="pathway">
    <text>Purine metabolism; IMP biosynthesis via de novo pathway; 5-amino-1-(5-phospho-D-ribosyl)imidazole-4-carboxamide from 5-amino-1-(5-phospho-D-ribosyl)imidazole-4-carboxylate: step 1/2.</text>
</comment>
<comment type="similarity">
    <text evidence="1">Belongs to the SAICAR synthetase family.</text>
</comment>
<comment type="sequence caution" evidence="1">
    <conflict type="erroneous initiation">
        <sequence resource="EMBL-CDS" id="BAB49693"/>
    </conflict>
</comment>
<accession>Q98I23</accession>
<feature type="chain" id="PRO_0000100860" description="Putative phosphoribosylaminoimidazole-succinocarboxamide synthase 2">
    <location>
        <begin position="1"/>
        <end position="313"/>
    </location>
</feature>